<accession>P9WLK6</accession>
<accession>L0TBF5</accession>
<accession>Q10687</accession>
<evidence type="ECO:0000256" key="1">
    <source>
        <dbReference type="SAM" id="MobiDB-lite"/>
    </source>
</evidence>
<reference key="1">
    <citation type="journal article" date="2002" name="J. Bacteriol.">
        <title>Whole-genome comparison of Mycobacterium tuberculosis clinical and laboratory strains.</title>
        <authorList>
            <person name="Fleischmann R.D."/>
            <person name="Alland D."/>
            <person name="Eisen J.A."/>
            <person name="Carpenter L."/>
            <person name="White O."/>
            <person name="Peterson J.D."/>
            <person name="DeBoy R.T."/>
            <person name="Dodson R.J."/>
            <person name="Gwinn M.L."/>
            <person name="Haft D.H."/>
            <person name="Hickey E.K."/>
            <person name="Kolonay J.F."/>
            <person name="Nelson W.C."/>
            <person name="Umayam L.A."/>
            <person name="Ermolaeva M.D."/>
            <person name="Salzberg S.L."/>
            <person name="Delcher A."/>
            <person name="Utterback T.R."/>
            <person name="Weidman J.F."/>
            <person name="Khouri H.M."/>
            <person name="Gill J."/>
            <person name="Mikula A."/>
            <person name="Bishai W."/>
            <person name="Jacobs W.R. Jr."/>
            <person name="Venter J.C."/>
            <person name="Fraser C.M."/>
        </authorList>
    </citation>
    <scope>NUCLEOTIDE SEQUENCE [LARGE SCALE GENOMIC DNA]</scope>
    <source>
        <strain>CDC 1551 / Oshkosh</strain>
    </source>
</reference>
<feature type="chain" id="PRO_0000427462" description="Uncharacterized protein MT2140">
    <location>
        <begin position="1"/>
        <end position="656"/>
    </location>
</feature>
<feature type="region of interest" description="Disordered" evidence="1">
    <location>
        <begin position="623"/>
        <end position="656"/>
    </location>
</feature>
<feature type="compositionally biased region" description="Basic and acidic residues" evidence="1">
    <location>
        <begin position="645"/>
        <end position="656"/>
    </location>
</feature>
<keyword id="KW-1185">Reference proteome</keyword>
<sequence>MQLRHINIRALIAEAGGDPWAIEHSLHAGRPAQIAELAEAFHAAGRCTAEANAAFEEARRRFEASWNRENGEHPINDSAEVQRVTAALGVQSLQLPKIGVDLENIAADLAEAQRAAAGRIATLESQLQRIDDQLDQALELEHDPRLAAAERSELDALITCLEQDAIDDTASALGQLQSIRAGYSDHLQQSLAMLRADGYDGAGLQGLDAPQSPVKPEEPIQIPPPGTGAPEVHRWWTSLTSEERQRLIAEHPEQIGNLNGVPVSARSDANIAVMTRDLNRVRDIATRYRTSVDDVLGDPAKYGLSAGDITRYRNADETKKGLDHNARNDPRNPSPVYLFAYDPMAFGGKGRAAIAIGNPDTAKHTAVIVPGTSSSVKGGWLHDNHDDALNLFNQAKAADPNNPTAVIAWMGYDAPNDFTDPRIATPMLARIGGAALAEDVNGLWVTHLGVGQNVTVLGHSYGSTTVADAFALGGMHANDAVLLGCPGTDLAHSAASFHLDGGRVYVGAASTDPISMLGQLDSLSQYVNRGNLAGQLQGLAVGLGTDPAGDGFGSVRFRAEVPNSDGINPHDHSYYYHRGSEALRSMADIASGHGDALASDGMLAQPRHQPGVEIDIPGLGSVEIDIPGTPASIDPEWSRPPGSITDDHVFDAPLHR</sequence>
<proteinExistence type="predicted"/>
<name>Y2079_MYCTO</name>
<organism>
    <name type="scientific">Mycobacterium tuberculosis (strain CDC 1551 / Oshkosh)</name>
    <dbReference type="NCBI Taxonomy" id="83331"/>
    <lineage>
        <taxon>Bacteria</taxon>
        <taxon>Bacillati</taxon>
        <taxon>Actinomycetota</taxon>
        <taxon>Actinomycetes</taxon>
        <taxon>Mycobacteriales</taxon>
        <taxon>Mycobacteriaceae</taxon>
        <taxon>Mycobacterium</taxon>
        <taxon>Mycobacterium tuberculosis complex</taxon>
    </lineage>
</organism>
<dbReference type="EMBL" id="AE000516">
    <property type="protein sequence ID" value="AAK46422.1"/>
    <property type="molecule type" value="Genomic_DNA"/>
</dbReference>
<dbReference type="PIR" id="B70766">
    <property type="entry name" value="B70766"/>
</dbReference>
<dbReference type="RefSeq" id="WP_003410703.1">
    <property type="nucleotide sequence ID" value="NZ_KK341227.1"/>
</dbReference>
<dbReference type="ESTHER" id="myctu-y2079">
    <property type="family name" value="Duf_1023"/>
</dbReference>
<dbReference type="KEGG" id="mtc:MT2140"/>
<dbReference type="PATRIC" id="fig|83331.31.peg.2309"/>
<dbReference type="HOGENOM" id="CLU_025057_2_1_11"/>
<dbReference type="Proteomes" id="UP000001020">
    <property type="component" value="Chromosome"/>
</dbReference>
<dbReference type="InterPro" id="IPR010427">
    <property type="entry name" value="DUF1023"/>
</dbReference>
<dbReference type="InterPro" id="IPR054469">
    <property type="entry name" value="Pred_hydrolase_N"/>
</dbReference>
<dbReference type="Pfam" id="PF06259">
    <property type="entry name" value="Abhydrolase_8"/>
    <property type="match status" value="1"/>
</dbReference>
<dbReference type="Pfam" id="PF22905">
    <property type="entry name" value="Hydro_N_hd"/>
    <property type="match status" value="1"/>
</dbReference>
<protein>
    <recommendedName>
        <fullName>Uncharacterized protein MT2140</fullName>
    </recommendedName>
</protein>
<gene>
    <name type="ordered locus">MT2140</name>
</gene>